<feature type="chain" id="PRO_0000255170" description="Lipid-A-disaccharide synthase">
    <location>
        <begin position="1"/>
        <end position="364"/>
    </location>
</feature>
<accession>Q5HWH9</accession>
<dbReference type="EC" id="2.4.1.182" evidence="1"/>
<dbReference type="EMBL" id="CP000025">
    <property type="protein sequence ID" value="AAW34926.1"/>
    <property type="molecule type" value="Genomic_DNA"/>
</dbReference>
<dbReference type="RefSeq" id="WP_002867737.1">
    <property type="nucleotide sequence ID" value="NC_003912.7"/>
</dbReference>
<dbReference type="SMR" id="Q5HWH9"/>
<dbReference type="CAZy" id="GT19">
    <property type="family name" value="Glycosyltransferase Family 19"/>
</dbReference>
<dbReference type="KEGG" id="cjr:CJE0336"/>
<dbReference type="HOGENOM" id="CLU_036577_3_1_7"/>
<dbReference type="UniPathway" id="UPA00973"/>
<dbReference type="GO" id="GO:0016020">
    <property type="term" value="C:membrane"/>
    <property type="evidence" value="ECO:0007669"/>
    <property type="project" value="GOC"/>
</dbReference>
<dbReference type="GO" id="GO:0008915">
    <property type="term" value="F:lipid-A-disaccharide synthase activity"/>
    <property type="evidence" value="ECO:0007669"/>
    <property type="project" value="UniProtKB-UniRule"/>
</dbReference>
<dbReference type="GO" id="GO:0005543">
    <property type="term" value="F:phospholipid binding"/>
    <property type="evidence" value="ECO:0007669"/>
    <property type="project" value="TreeGrafter"/>
</dbReference>
<dbReference type="GO" id="GO:0009245">
    <property type="term" value="P:lipid A biosynthetic process"/>
    <property type="evidence" value="ECO:0007669"/>
    <property type="project" value="UniProtKB-UniRule"/>
</dbReference>
<dbReference type="HAMAP" id="MF_00392">
    <property type="entry name" value="LpxB"/>
    <property type="match status" value="1"/>
</dbReference>
<dbReference type="InterPro" id="IPR003835">
    <property type="entry name" value="Glyco_trans_19"/>
</dbReference>
<dbReference type="NCBIfam" id="TIGR00215">
    <property type="entry name" value="lpxB"/>
    <property type="match status" value="1"/>
</dbReference>
<dbReference type="PANTHER" id="PTHR30372">
    <property type="entry name" value="LIPID-A-DISACCHARIDE SYNTHASE"/>
    <property type="match status" value="1"/>
</dbReference>
<dbReference type="PANTHER" id="PTHR30372:SF4">
    <property type="entry name" value="LIPID-A-DISACCHARIDE SYNTHASE, MITOCHONDRIAL-RELATED"/>
    <property type="match status" value="1"/>
</dbReference>
<dbReference type="Pfam" id="PF02684">
    <property type="entry name" value="LpxB"/>
    <property type="match status" value="1"/>
</dbReference>
<dbReference type="SUPFAM" id="SSF53756">
    <property type="entry name" value="UDP-Glycosyltransferase/glycogen phosphorylase"/>
    <property type="match status" value="1"/>
</dbReference>
<comment type="function">
    <text evidence="1">Condensation of UDP-2,3-diacylglucosamine and 2,3-diacylglucosamine-1-phosphate to form lipid A disaccharide, a precursor of lipid A, a phosphorylated glycolipid that anchors the lipopolysaccharide to the outer membrane of the cell.</text>
</comment>
<comment type="catalytic activity">
    <reaction evidence="1">
        <text>a lipid X + a UDP-2-N,3-O-bis[(3R)-3-hydroxyacyl]-alpha-D-glucosamine = a lipid A disaccharide + UDP + H(+)</text>
        <dbReference type="Rhea" id="RHEA:67828"/>
        <dbReference type="ChEBI" id="CHEBI:15378"/>
        <dbReference type="ChEBI" id="CHEBI:58223"/>
        <dbReference type="ChEBI" id="CHEBI:137748"/>
        <dbReference type="ChEBI" id="CHEBI:176338"/>
        <dbReference type="ChEBI" id="CHEBI:176343"/>
        <dbReference type="EC" id="2.4.1.182"/>
    </reaction>
</comment>
<comment type="pathway">
    <text evidence="1">Bacterial outer membrane biogenesis; LPS lipid A biosynthesis.</text>
</comment>
<comment type="similarity">
    <text evidence="1">Belongs to the LpxB family.</text>
</comment>
<protein>
    <recommendedName>
        <fullName evidence="1">Lipid-A-disaccharide synthase</fullName>
        <ecNumber evidence="1">2.4.1.182</ecNumber>
    </recommendedName>
</protein>
<keyword id="KW-0328">Glycosyltransferase</keyword>
<keyword id="KW-0441">Lipid A biosynthesis</keyword>
<keyword id="KW-0444">Lipid biosynthesis</keyword>
<keyword id="KW-0443">Lipid metabolism</keyword>
<keyword id="KW-0808">Transferase</keyword>
<proteinExistence type="inferred from homology"/>
<organism>
    <name type="scientific">Campylobacter jejuni (strain RM1221)</name>
    <dbReference type="NCBI Taxonomy" id="195099"/>
    <lineage>
        <taxon>Bacteria</taxon>
        <taxon>Pseudomonadati</taxon>
        <taxon>Campylobacterota</taxon>
        <taxon>Epsilonproteobacteria</taxon>
        <taxon>Campylobacterales</taxon>
        <taxon>Campylobacteraceae</taxon>
        <taxon>Campylobacter</taxon>
    </lineage>
</organism>
<evidence type="ECO:0000255" key="1">
    <source>
        <dbReference type="HAMAP-Rule" id="MF_00392"/>
    </source>
</evidence>
<reference key="1">
    <citation type="journal article" date="2005" name="PLoS Biol.">
        <title>Major structural differences and novel potential virulence mechanisms from the genomes of multiple Campylobacter species.</title>
        <authorList>
            <person name="Fouts D.E."/>
            <person name="Mongodin E.F."/>
            <person name="Mandrell R.E."/>
            <person name="Miller W.G."/>
            <person name="Rasko D.A."/>
            <person name="Ravel J."/>
            <person name="Brinkac L.M."/>
            <person name="DeBoy R.T."/>
            <person name="Parker C.T."/>
            <person name="Daugherty S.C."/>
            <person name="Dodson R.J."/>
            <person name="Durkin A.S."/>
            <person name="Madupu R."/>
            <person name="Sullivan S.A."/>
            <person name="Shetty J.U."/>
            <person name="Ayodeji M.A."/>
            <person name="Shvartsbeyn A."/>
            <person name="Schatz M.C."/>
            <person name="Badger J.H."/>
            <person name="Fraser C.M."/>
            <person name="Nelson K.E."/>
        </authorList>
    </citation>
    <scope>NUCLEOTIDE SEQUENCE [LARGE SCALE GENOMIC DNA]</scope>
    <source>
        <strain>RM1221</strain>
    </source>
</reference>
<name>LPXB_CAMJR</name>
<sequence length="364" mass="41568">MKTFLVCALEPSANLHLKEVLKAYKKDFGEFELHGIYDESLCKEFDLNSKPLYSSHEFSAMGFIEVLPLIFKAKKAIKELVNLTLSQTMDAVLCIDSPAFNIPFAKALKKAGSKIPRIYYILPQVWAWKKGRIPIIESHFDILASILPFDNQFFNKSTYIGHPLLDEIKEFKNQEDINHTFSKKDDEKTIAFLPGSRRSEIRRLMPIFKELSQKFKGEKILCVPSFNLEKLEVYGDISEFKIESNTPKVLKKADFAFICSGTATLEAALVGTPFVLAYKAKAIDIFIAKLFVKLKHIGLANIFCDFAGKEALNPEFLQDKVNVLNLYEAYNKYDYKAFFAKVDFLKEYLQFGSAKNLAKILNEI</sequence>
<gene>
    <name evidence="1" type="primary">lpxB</name>
    <name type="ordered locus">CJE0336</name>
</gene>